<sequence>MTRLILAIDQGTTSTRALLFRPDTRIAALAQAEFPQHFPASGWVEHEPEDLWRSTLDTCRAALRQAGAGAREVAAIGITNQRETTLIWDRRTGEAVHRAIVWQDRRTAGLCARLKEQGHEPLVSERTGLLLDPYFAGTKIAWILDQVPGARARADAGELAFGTVDSYLLWRLTGGRVHVTDATNASRTLLFDIHRGAWDDDLLRLFDIPRSLLPEVRDSSGDFGTTDPDLFGAPIPIRGVAGDQQAATVGQACFRPGMVKSTYGTGCFALLNTGPQPVASRNKLLTTIAYQLGGERTYALEGSIFVAGAAVQWLRDGLGVVASAAETGDLAERADPAQEVYLVPAFVGLGAPYWEPDVRGALYGLTRGTRPAELARAALESVCYQTADLLAAMRADWPDGDGSGTVLRVDGGMVASDWTMQRLADLLAAPVDRPEVKETTALGAAYLAGLACGLYPEPERFADHWRLERRFTPAMDGPVRERKLAGWRKAVGCLLGRPVPLP</sequence>
<keyword id="KW-0067">ATP-binding</keyword>
<keyword id="KW-0319">Glycerol metabolism</keyword>
<keyword id="KW-0418">Kinase</keyword>
<keyword id="KW-0547">Nucleotide-binding</keyword>
<keyword id="KW-1185">Reference proteome</keyword>
<keyword id="KW-0808">Transferase</keyword>
<name>GLPK_METNO</name>
<organism>
    <name type="scientific">Methylobacterium nodulans (strain LMG 21967 / CNCM I-2342 / ORS 2060)</name>
    <dbReference type="NCBI Taxonomy" id="460265"/>
    <lineage>
        <taxon>Bacteria</taxon>
        <taxon>Pseudomonadati</taxon>
        <taxon>Pseudomonadota</taxon>
        <taxon>Alphaproteobacteria</taxon>
        <taxon>Hyphomicrobiales</taxon>
        <taxon>Methylobacteriaceae</taxon>
        <taxon>Methylobacterium</taxon>
    </lineage>
</organism>
<accession>B8IKN3</accession>
<feature type="chain" id="PRO_1000124198" description="Glycerol kinase">
    <location>
        <begin position="1"/>
        <end position="502"/>
    </location>
</feature>
<feature type="binding site" evidence="1">
    <location>
        <position position="12"/>
    </location>
    <ligand>
        <name>ADP</name>
        <dbReference type="ChEBI" id="CHEBI:456216"/>
    </ligand>
</feature>
<feature type="binding site" evidence="1">
    <location>
        <position position="12"/>
    </location>
    <ligand>
        <name>ATP</name>
        <dbReference type="ChEBI" id="CHEBI:30616"/>
    </ligand>
</feature>
<feature type="binding site" evidence="1">
    <location>
        <position position="12"/>
    </location>
    <ligand>
        <name>sn-glycerol 3-phosphate</name>
        <dbReference type="ChEBI" id="CHEBI:57597"/>
    </ligand>
</feature>
<feature type="binding site" evidence="1">
    <location>
        <position position="13"/>
    </location>
    <ligand>
        <name>ATP</name>
        <dbReference type="ChEBI" id="CHEBI:30616"/>
    </ligand>
</feature>
<feature type="binding site" evidence="1">
    <location>
        <position position="14"/>
    </location>
    <ligand>
        <name>ATP</name>
        <dbReference type="ChEBI" id="CHEBI:30616"/>
    </ligand>
</feature>
<feature type="binding site" evidence="1">
    <location>
        <position position="16"/>
    </location>
    <ligand>
        <name>ADP</name>
        <dbReference type="ChEBI" id="CHEBI:456216"/>
    </ligand>
</feature>
<feature type="binding site" evidence="1">
    <location>
        <position position="82"/>
    </location>
    <ligand>
        <name>glycerol</name>
        <dbReference type="ChEBI" id="CHEBI:17754"/>
    </ligand>
</feature>
<feature type="binding site" evidence="1">
    <location>
        <position position="82"/>
    </location>
    <ligand>
        <name>sn-glycerol 3-phosphate</name>
        <dbReference type="ChEBI" id="CHEBI:57597"/>
    </ligand>
</feature>
<feature type="binding site" evidence="1">
    <location>
        <position position="83"/>
    </location>
    <ligand>
        <name>glycerol</name>
        <dbReference type="ChEBI" id="CHEBI:17754"/>
    </ligand>
</feature>
<feature type="binding site" evidence="1">
    <location>
        <position position="83"/>
    </location>
    <ligand>
        <name>sn-glycerol 3-phosphate</name>
        <dbReference type="ChEBI" id="CHEBI:57597"/>
    </ligand>
</feature>
<feature type="binding site" evidence="1">
    <location>
        <position position="134"/>
    </location>
    <ligand>
        <name>glycerol</name>
        <dbReference type="ChEBI" id="CHEBI:17754"/>
    </ligand>
</feature>
<feature type="binding site" evidence="1">
    <location>
        <position position="134"/>
    </location>
    <ligand>
        <name>sn-glycerol 3-phosphate</name>
        <dbReference type="ChEBI" id="CHEBI:57597"/>
    </ligand>
</feature>
<feature type="binding site" evidence="1">
    <location>
        <position position="243"/>
    </location>
    <ligand>
        <name>glycerol</name>
        <dbReference type="ChEBI" id="CHEBI:17754"/>
    </ligand>
</feature>
<feature type="binding site" evidence="1">
    <location>
        <position position="243"/>
    </location>
    <ligand>
        <name>sn-glycerol 3-phosphate</name>
        <dbReference type="ChEBI" id="CHEBI:57597"/>
    </ligand>
</feature>
<feature type="binding site" evidence="1">
    <location>
        <position position="244"/>
    </location>
    <ligand>
        <name>glycerol</name>
        <dbReference type="ChEBI" id="CHEBI:17754"/>
    </ligand>
</feature>
<feature type="binding site" evidence="1">
    <location>
        <position position="265"/>
    </location>
    <ligand>
        <name>ADP</name>
        <dbReference type="ChEBI" id="CHEBI:456216"/>
    </ligand>
</feature>
<feature type="binding site" evidence="1">
    <location>
        <position position="265"/>
    </location>
    <ligand>
        <name>ATP</name>
        <dbReference type="ChEBI" id="CHEBI:30616"/>
    </ligand>
</feature>
<feature type="binding site" evidence="1">
    <location>
        <position position="308"/>
    </location>
    <ligand>
        <name>ADP</name>
        <dbReference type="ChEBI" id="CHEBI:456216"/>
    </ligand>
</feature>
<feature type="binding site" evidence="1">
    <location>
        <position position="308"/>
    </location>
    <ligand>
        <name>ATP</name>
        <dbReference type="ChEBI" id="CHEBI:30616"/>
    </ligand>
</feature>
<feature type="binding site" evidence="1">
    <location>
        <position position="312"/>
    </location>
    <ligand>
        <name>ATP</name>
        <dbReference type="ChEBI" id="CHEBI:30616"/>
    </ligand>
</feature>
<feature type="binding site" evidence="1">
    <location>
        <position position="412"/>
    </location>
    <ligand>
        <name>ADP</name>
        <dbReference type="ChEBI" id="CHEBI:456216"/>
    </ligand>
</feature>
<feature type="binding site" evidence="1">
    <location>
        <position position="412"/>
    </location>
    <ligand>
        <name>ATP</name>
        <dbReference type="ChEBI" id="CHEBI:30616"/>
    </ligand>
</feature>
<comment type="function">
    <text evidence="1">Key enzyme in the regulation of glycerol uptake and metabolism. Catalyzes the phosphorylation of glycerol to yield sn-glycerol 3-phosphate.</text>
</comment>
<comment type="catalytic activity">
    <reaction evidence="1">
        <text>glycerol + ATP = sn-glycerol 3-phosphate + ADP + H(+)</text>
        <dbReference type="Rhea" id="RHEA:21644"/>
        <dbReference type="ChEBI" id="CHEBI:15378"/>
        <dbReference type="ChEBI" id="CHEBI:17754"/>
        <dbReference type="ChEBI" id="CHEBI:30616"/>
        <dbReference type="ChEBI" id="CHEBI:57597"/>
        <dbReference type="ChEBI" id="CHEBI:456216"/>
        <dbReference type="EC" id="2.7.1.30"/>
    </reaction>
</comment>
<comment type="activity regulation">
    <text evidence="1">Inhibited by fructose 1,6-bisphosphate (FBP).</text>
</comment>
<comment type="pathway">
    <text evidence="1">Polyol metabolism; glycerol degradation via glycerol kinase pathway; sn-glycerol 3-phosphate from glycerol: step 1/1.</text>
</comment>
<comment type="similarity">
    <text evidence="1">Belongs to the FGGY kinase family.</text>
</comment>
<proteinExistence type="inferred from homology"/>
<protein>
    <recommendedName>
        <fullName evidence="1">Glycerol kinase</fullName>
        <ecNumber evidence="1">2.7.1.30</ecNumber>
    </recommendedName>
    <alternativeName>
        <fullName evidence="1">ATP:glycerol 3-phosphotransferase</fullName>
    </alternativeName>
    <alternativeName>
        <fullName evidence="1">Glycerokinase</fullName>
        <shortName evidence="1">GK</shortName>
    </alternativeName>
</protein>
<gene>
    <name evidence="1" type="primary">glpK</name>
    <name type="ordered locus">Mnod_1239</name>
</gene>
<dbReference type="EC" id="2.7.1.30" evidence="1"/>
<dbReference type="EMBL" id="CP001349">
    <property type="protein sequence ID" value="ACL56240.1"/>
    <property type="molecule type" value="Genomic_DNA"/>
</dbReference>
<dbReference type="RefSeq" id="WP_015927936.1">
    <property type="nucleotide sequence ID" value="NC_011894.1"/>
</dbReference>
<dbReference type="SMR" id="B8IKN3"/>
<dbReference type="STRING" id="460265.Mnod_1239"/>
<dbReference type="KEGG" id="mno:Mnod_1239"/>
<dbReference type="eggNOG" id="COG0554">
    <property type="taxonomic scope" value="Bacteria"/>
</dbReference>
<dbReference type="HOGENOM" id="CLU_009281_2_3_5"/>
<dbReference type="OrthoDB" id="9805576at2"/>
<dbReference type="UniPathway" id="UPA00618">
    <property type="reaction ID" value="UER00672"/>
</dbReference>
<dbReference type="Proteomes" id="UP000008207">
    <property type="component" value="Chromosome"/>
</dbReference>
<dbReference type="GO" id="GO:0005829">
    <property type="term" value="C:cytosol"/>
    <property type="evidence" value="ECO:0007669"/>
    <property type="project" value="TreeGrafter"/>
</dbReference>
<dbReference type="GO" id="GO:0005524">
    <property type="term" value="F:ATP binding"/>
    <property type="evidence" value="ECO:0007669"/>
    <property type="project" value="UniProtKB-UniRule"/>
</dbReference>
<dbReference type="GO" id="GO:0004370">
    <property type="term" value="F:glycerol kinase activity"/>
    <property type="evidence" value="ECO:0000250"/>
    <property type="project" value="UniProtKB"/>
</dbReference>
<dbReference type="GO" id="GO:0019563">
    <property type="term" value="P:glycerol catabolic process"/>
    <property type="evidence" value="ECO:0007669"/>
    <property type="project" value="UniProtKB-UniRule"/>
</dbReference>
<dbReference type="GO" id="GO:0006071">
    <property type="term" value="P:glycerol metabolic process"/>
    <property type="evidence" value="ECO:0000250"/>
    <property type="project" value="UniProtKB"/>
</dbReference>
<dbReference type="GO" id="GO:0006072">
    <property type="term" value="P:glycerol-3-phosphate metabolic process"/>
    <property type="evidence" value="ECO:0007669"/>
    <property type="project" value="InterPro"/>
</dbReference>
<dbReference type="CDD" id="cd07786">
    <property type="entry name" value="FGGY_EcGK_like"/>
    <property type="match status" value="1"/>
</dbReference>
<dbReference type="FunFam" id="3.30.420.40:FF:000007">
    <property type="entry name" value="Glycerol kinase"/>
    <property type="match status" value="1"/>
</dbReference>
<dbReference type="FunFam" id="3.30.420.40:FF:000008">
    <property type="entry name" value="Glycerol kinase"/>
    <property type="match status" value="1"/>
</dbReference>
<dbReference type="Gene3D" id="3.30.420.40">
    <property type="match status" value="2"/>
</dbReference>
<dbReference type="HAMAP" id="MF_00186">
    <property type="entry name" value="Glycerol_kin"/>
    <property type="match status" value="1"/>
</dbReference>
<dbReference type="InterPro" id="IPR043129">
    <property type="entry name" value="ATPase_NBD"/>
</dbReference>
<dbReference type="InterPro" id="IPR000577">
    <property type="entry name" value="Carb_kinase_FGGY"/>
</dbReference>
<dbReference type="InterPro" id="IPR018483">
    <property type="entry name" value="Carb_kinase_FGGY_CS"/>
</dbReference>
<dbReference type="InterPro" id="IPR018485">
    <property type="entry name" value="FGGY_C"/>
</dbReference>
<dbReference type="InterPro" id="IPR018484">
    <property type="entry name" value="FGGY_N"/>
</dbReference>
<dbReference type="InterPro" id="IPR005999">
    <property type="entry name" value="Glycerol_kin"/>
</dbReference>
<dbReference type="NCBIfam" id="TIGR01311">
    <property type="entry name" value="glycerol_kin"/>
    <property type="match status" value="1"/>
</dbReference>
<dbReference type="NCBIfam" id="NF000756">
    <property type="entry name" value="PRK00047.1"/>
    <property type="match status" value="1"/>
</dbReference>
<dbReference type="PANTHER" id="PTHR10196:SF78">
    <property type="entry name" value="GLYCEROL KINASE"/>
    <property type="match status" value="1"/>
</dbReference>
<dbReference type="PANTHER" id="PTHR10196">
    <property type="entry name" value="SUGAR KINASE"/>
    <property type="match status" value="1"/>
</dbReference>
<dbReference type="Pfam" id="PF02782">
    <property type="entry name" value="FGGY_C"/>
    <property type="match status" value="1"/>
</dbReference>
<dbReference type="Pfam" id="PF00370">
    <property type="entry name" value="FGGY_N"/>
    <property type="match status" value="1"/>
</dbReference>
<dbReference type="PIRSF" id="PIRSF000538">
    <property type="entry name" value="GlpK"/>
    <property type="match status" value="1"/>
</dbReference>
<dbReference type="SUPFAM" id="SSF53067">
    <property type="entry name" value="Actin-like ATPase domain"/>
    <property type="match status" value="2"/>
</dbReference>
<dbReference type="PROSITE" id="PS00445">
    <property type="entry name" value="FGGY_KINASES_2"/>
    <property type="match status" value="1"/>
</dbReference>
<evidence type="ECO:0000255" key="1">
    <source>
        <dbReference type="HAMAP-Rule" id="MF_00186"/>
    </source>
</evidence>
<reference key="1">
    <citation type="submission" date="2009-01" db="EMBL/GenBank/DDBJ databases">
        <title>Complete sequence of chromosome of Methylobacterium nodulans ORS 2060.</title>
        <authorList>
            <consortium name="US DOE Joint Genome Institute"/>
            <person name="Lucas S."/>
            <person name="Copeland A."/>
            <person name="Lapidus A."/>
            <person name="Glavina del Rio T."/>
            <person name="Dalin E."/>
            <person name="Tice H."/>
            <person name="Bruce D."/>
            <person name="Goodwin L."/>
            <person name="Pitluck S."/>
            <person name="Sims D."/>
            <person name="Brettin T."/>
            <person name="Detter J.C."/>
            <person name="Han C."/>
            <person name="Larimer F."/>
            <person name="Land M."/>
            <person name="Hauser L."/>
            <person name="Kyrpides N."/>
            <person name="Ivanova N."/>
            <person name="Marx C.J."/>
            <person name="Richardson P."/>
        </authorList>
    </citation>
    <scope>NUCLEOTIDE SEQUENCE [LARGE SCALE GENOMIC DNA]</scope>
    <source>
        <strain>LMG 21967 / CNCM I-2342 / ORS 2060</strain>
    </source>
</reference>